<organism>
    <name type="scientific">Escherichia coli (strain K12)</name>
    <dbReference type="NCBI Taxonomy" id="83333"/>
    <lineage>
        <taxon>Bacteria</taxon>
        <taxon>Pseudomonadati</taxon>
        <taxon>Pseudomonadota</taxon>
        <taxon>Gammaproteobacteria</taxon>
        <taxon>Enterobacterales</taxon>
        <taxon>Enterobacteriaceae</taxon>
        <taxon>Escherichia</taxon>
    </lineage>
</organism>
<accession>P64638</accession>
<accession>P46845</accession>
<accession>Q2M775</accession>
<protein>
    <recommendedName>
        <fullName evidence="1 4">Probable [Fe-S]-dependent transcriptional repressor FeoC</fullName>
    </recommendedName>
    <alternativeName>
        <fullName evidence="5">Fe(2+) iron transport protein C</fullName>
    </alternativeName>
</protein>
<sequence>MASLIQVRDLLALRGRMEAAQISQTLNTPQPMINAMLQQLESMGKAVRIQEEPDGCLSGSCKSCPEGKACLREWWALR</sequence>
<gene>
    <name evidence="1" type="primary">feoC</name>
    <name type="synonym">yhgG</name>
    <name type="ordered locus">b3410</name>
    <name type="ordered locus">JW3373</name>
</gene>
<keyword id="KW-0002">3D-structure</keyword>
<keyword id="KW-0238">DNA-binding</keyword>
<keyword id="KW-0408">Iron</keyword>
<keyword id="KW-0411">Iron-sulfur</keyword>
<keyword id="KW-0479">Metal-binding</keyword>
<keyword id="KW-1185">Reference proteome</keyword>
<keyword id="KW-0678">Repressor</keyword>
<keyword id="KW-0804">Transcription</keyword>
<keyword id="KW-0805">Transcription regulation</keyword>
<comment type="function">
    <text evidence="1 3">May function as a transcriptional regulator that controls feoABC expression.</text>
</comment>
<comment type="induction">
    <text evidence="2 3">Up-regulated by S-nitrosoglutathione under anaerobic conditions. Repressed by the global regulator Fur.</text>
</comment>
<comment type="similarity">
    <text evidence="1 5">Belongs to the FeoC family.</text>
</comment>
<dbReference type="EMBL" id="U18997">
    <property type="protein sequence ID" value="AAA58208.1"/>
    <property type="molecule type" value="Genomic_DNA"/>
</dbReference>
<dbReference type="EMBL" id="U00096">
    <property type="protein sequence ID" value="AAC76435.1"/>
    <property type="molecule type" value="Genomic_DNA"/>
</dbReference>
<dbReference type="EMBL" id="AP009048">
    <property type="protein sequence ID" value="BAE77881.1"/>
    <property type="molecule type" value="Genomic_DNA"/>
</dbReference>
<dbReference type="PIR" id="E65136">
    <property type="entry name" value="E65136"/>
</dbReference>
<dbReference type="RefSeq" id="NP_417869.1">
    <property type="nucleotide sequence ID" value="NC_000913.3"/>
</dbReference>
<dbReference type="RefSeq" id="WP_000157586.1">
    <property type="nucleotide sequence ID" value="NZ_STEB01000004.1"/>
</dbReference>
<dbReference type="PDB" id="1XN7">
    <property type="method" value="NMR"/>
    <property type="chains" value="A=1-78"/>
</dbReference>
<dbReference type="PDBsum" id="1XN7"/>
<dbReference type="SMR" id="P64638"/>
<dbReference type="BioGRID" id="4263492">
    <property type="interactions" value="22"/>
</dbReference>
<dbReference type="BioGRID" id="852227">
    <property type="interactions" value="3"/>
</dbReference>
<dbReference type="FunCoup" id="P64638">
    <property type="interactions" value="35"/>
</dbReference>
<dbReference type="IntAct" id="P64638">
    <property type="interactions" value="3"/>
</dbReference>
<dbReference type="STRING" id="511145.b3410"/>
<dbReference type="PaxDb" id="511145-b3410"/>
<dbReference type="EnsemblBacteria" id="AAC76435">
    <property type="protein sequence ID" value="AAC76435"/>
    <property type="gene ID" value="b3410"/>
</dbReference>
<dbReference type="GeneID" id="86948257"/>
<dbReference type="GeneID" id="947918"/>
<dbReference type="KEGG" id="ecj:JW3373"/>
<dbReference type="KEGG" id="eco:b3410"/>
<dbReference type="KEGG" id="ecoc:C3026_18500"/>
<dbReference type="PATRIC" id="fig|1411691.4.peg.3319"/>
<dbReference type="EchoBASE" id="EB2769"/>
<dbReference type="eggNOG" id="ENOG50330S2">
    <property type="taxonomic scope" value="Bacteria"/>
</dbReference>
<dbReference type="HOGENOM" id="CLU_189182_0_0_6"/>
<dbReference type="InParanoid" id="P64638"/>
<dbReference type="OMA" id="HTPQPMI"/>
<dbReference type="OrthoDB" id="6903254at2"/>
<dbReference type="PhylomeDB" id="P64638"/>
<dbReference type="BioCyc" id="EcoCyc:EG12933-MONOMER"/>
<dbReference type="EvolutionaryTrace" id="P64638"/>
<dbReference type="PRO" id="PR:P64638"/>
<dbReference type="Proteomes" id="UP000000625">
    <property type="component" value="Chromosome"/>
</dbReference>
<dbReference type="GO" id="GO:0051539">
    <property type="term" value="F:4 iron, 4 sulfur cluster binding"/>
    <property type="evidence" value="ECO:0000314"/>
    <property type="project" value="EcoCyc"/>
</dbReference>
<dbReference type="GO" id="GO:0003677">
    <property type="term" value="F:DNA binding"/>
    <property type="evidence" value="ECO:0007669"/>
    <property type="project" value="UniProtKB-KW"/>
</dbReference>
<dbReference type="GO" id="GO:0005506">
    <property type="term" value="F:iron ion binding"/>
    <property type="evidence" value="ECO:0007669"/>
    <property type="project" value="UniProtKB-UniRule"/>
</dbReference>
<dbReference type="GO" id="GO:0033212">
    <property type="term" value="P:iron import into cell"/>
    <property type="evidence" value="ECO:0000317"/>
    <property type="project" value="EcoCyc"/>
</dbReference>
<dbReference type="Gene3D" id="1.10.10.10">
    <property type="entry name" value="Winged helix-like DNA-binding domain superfamily/Winged helix DNA-binding domain"/>
    <property type="match status" value="1"/>
</dbReference>
<dbReference type="HAMAP" id="MF_01586">
    <property type="entry name" value="FeoC"/>
    <property type="match status" value="1"/>
</dbReference>
<dbReference type="InterPro" id="IPR023732">
    <property type="entry name" value="FeoC"/>
</dbReference>
<dbReference type="InterPro" id="IPR015102">
    <property type="entry name" value="Tscrpt_reg_HTH_FeoC"/>
</dbReference>
<dbReference type="InterPro" id="IPR036388">
    <property type="entry name" value="WH-like_DNA-bd_sf"/>
</dbReference>
<dbReference type="InterPro" id="IPR036390">
    <property type="entry name" value="WH_DNA-bd_sf"/>
</dbReference>
<dbReference type="NCBIfam" id="NF011960">
    <property type="entry name" value="PRK15431.1"/>
    <property type="match status" value="1"/>
</dbReference>
<dbReference type="Pfam" id="PF09012">
    <property type="entry name" value="FeoC"/>
    <property type="match status" value="1"/>
</dbReference>
<dbReference type="SUPFAM" id="SSF46785">
    <property type="entry name" value="Winged helix' DNA-binding domain"/>
    <property type="match status" value="1"/>
</dbReference>
<name>FEOC_ECOLI</name>
<proteinExistence type="evidence at protein level"/>
<evidence type="ECO:0000255" key="1">
    <source>
        <dbReference type="HAMAP-Rule" id="MF_01586"/>
    </source>
</evidence>
<evidence type="ECO:0000269" key="2">
    <source>
    </source>
</evidence>
<evidence type="ECO:0000269" key="3">
    <source>
    </source>
</evidence>
<evidence type="ECO:0000303" key="4">
    <source>
    </source>
</evidence>
<evidence type="ECO:0000305" key="5"/>
<evidence type="ECO:0000305" key="6">
    <source>
    </source>
</evidence>
<evidence type="ECO:0007829" key="7">
    <source>
        <dbReference type="PDB" id="1XN7"/>
    </source>
</evidence>
<feature type="chain" id="PRO_0000169546" description="Probable [Fe-S]-dependent transcriptional repressor FeoC">
    <location>
        <begin position="1"/>
        <end position="78"/>
    </location>
</feature>
<feature type="binding site" evidence="1 6">
    <location>
        <position position="56"/>
    </location>
    <ligand>
        <name>iron-sulfur cluster</name>
        <dbReference type="ChEBI" id="CHEBI:30408"/>
    </ligand>
</feature>
<feature type="binding site" evidence="1 6">
    <location>
        <position position="61"/>
    </location>
    <ligand>
        <name>iron-sulfur cluster</name>
        <dbReference type="ChEBI" id="CHEBI:30408"/>
    </ligand>
</feature>
<feature type="binding site" evidence="1 6">
    <location>
        <position position="64"/>
    </location>
    <ligand>
        <name>iron-sulfur cluster</name>
        <dbReference type="ChEBI" id="CHEBI:30408"/>
    </ligand>
</feature>
<feature type="binding site" evidence="1 6">
    <location>
        <position position="70"/>
    </location>
    <ligand>
        <name>iron-sulfur cluster</name>
        <dbReference type="ChEBI" id="CHEBI:30408"/>
    </ligand>
</feature>
<feature type="helix" evidence="7">
    <location>
        <begin position="4"/>
        <end position="13"/>
    </location>
</feature>
<feature type="helix" evidence="7">
    <location>
        <begin position="19"/>
        <end position="25"/>
    </location>
</feature>
<feature type="helix" evidence="7">
    <location>
        <begin position="30"/>
        <end position="43"/>
    </location>
</feature>
<feature type="strand" evidence="7">
    <location>
        <begin position="45"/>
        <end position="49"/>
    </location>
</feature>
<feature type="strand" evidence="7">
    <location>
        <begin position="74"/>
        <end position="77"/>
    </location>
</feature>
<reference key="1">
    <citation type="journal article" date="1997" name="Science">
        <title>The complete genome sequence of Escherichia coli K-12.</title>
        <authorList>
            <person name="Blattner F.R."/>
            <person name="Plunkett G. III"/>
            <person name="Bloch C.A."/>
            <person name="Perna N.T."/>
            <person name="Burland V."/>
            <person name="Riley M."/>
            <person name="Collado-Vides J."/>
            <person name="Glasner J.D."/>
            <person name="Rode C.K."/>
            <person name="Mayhew G.F."/>
            <person name="Gregor J."/>
            <person name="Davis N.W."/>
            <person name="Kirkpatrick H.A."/>
            <person name="Goeden M.A."/>
            <person name="Rose D.J."/>
            <person name="Mau B."/>
            <person name="Shao Y."/>
        </authorList>
    </citation>
    <scope>NUCLEOTIDE SEQUENCE [LARGE SCALE GENOMIC DNA]</scope>
    <source>
        <strain>K12 / MG1655 / ATCC 47076</strain>
    </source>
</reference>
<reference key="2">
    <citation type="journal article" date="2006" name="Mol. Syst. Biol.">
        <title>Highly accurate genome sequences of Escherichia coli K-12 strains MG1655 and W3110.</title>
        <authorList>
            <person name="Hayashi K."/>
            <person name="Morooka N."/>
            <person name="Yamamoto Y."/>
            <person name="Fujita K."/>
            <person name="Isono K."/>
            <person name="Choi S."/>
            <person name="Ohtsubo E."/>
            <person name="Baba T."/>
            <person name="Wanner B.L."/>
            <person name="Mori H."/>
            <person name="Horiuchi T."/>
        </authorList>
    </citation>
    <scope>NUCLEOTIDE SEQUENCE [LARGE SCALE GENOMIC DNA]</scope>
    <source>
        <strain>K12 / W3110 / ATCC 27325 / DSM 5911</strain>
    </source>
</reference>
<reference key="3">
    <citation type="journal article" date="2005" name="J. Biol. Chem.">
        <title>Transcriptional responses of Escherichia coli to S-nitrosoglutathione under defined chemostat conditions reveal major changes in methionine biosynthesis.</title>
        <authorList>
            <person name="Flatley J."/>
            <person name="Barrett J."/>
            <person name="Pullan S.T."/>
            <person name="Hughes M.N."/>
            <person name="Green J."/>
            <person name="Poole R.K."/>
        </authorList>
    </citation>
    <scope>INDUCTION</scope>
    <source>
        <strain>K12 / MG1655 / ATCC 47076</strain>
    </source>
</reference>
<reference key="4">
    <citation type="journal article" date="2006" name="BioMetals">
        <title>Feo -- transport of ferrous iron into bacteria.</title>
        <authorList>
            <person name="Cartron M.L."/>
            <person name="Maddocks S."/>
            <person name="Gillingham P."/>
            <person name="Craven C.J."/>
            <person name="Andrews S.C."/>
        </authorList>
    </citation>
    <scope>FUNCTION</scope>
    <scope>INDUCTION</scope>
</reference>
<reference key="5">
    <citation type="submission" date="2005-01" db="PDB data bank">
        <title>Solution structure of E.coli protein yhgG: the northeast structural genomics consortium target ET95.</title>
        <authorList>
            <consortium name="Northeast structural genomics consortium (NESG)"/>
        </authorList>
    </citation>
    <scope>STRUCTURE BY NMR</scope>
</reference>